<protein>
    <recommendedName>
        <fullName evidence="1">L-fucose mutarotase</fullName>
        <ecNumber evidence="1">5.1.3.29</ecNumber>
    </recommendedName>
    <alternativeName>
        <fullName evidence="1">Fucose 1-epimerase</fullName>
    </alternativeName>
    <alternativeName>
        <fullName evidence="1">Type-2 mutarotase</fullName>
    </alternativeName>
</protein>
<comment type="function">
    <text evidence="1">Involved in the anomeric conversion of L-fucose.</text>
</comment>
<comment type="catalytic activity">
    <reaction evidence="1">
        <text>alpha-L-fucose = beta-L-fucose</text>
        <dbReference type="Rhea" id="RHEA:25580"/>
        <dbReference type="ChEBI" id="CHEBI:42548"/>
        <dbReference type="ChEBI" id="CHEBI:42589"/>
        <dbReference type="EC" id="5.1.3.29"/>
    </reaction>
</comment>
<comment type="pathway">
    <text evidence="1">Carbohydrate metabolism; L-fucose metabolism.</text>
</comment>
<comment type="subunit">
    <text evidence="1">Homodecamer.</text>
</comment>
<comment type="subcellular location">
    <subcellularLocation>
        <location evidence="1">Cytoplasm</location>
    </subcellularLocation>
</comment>
<comment type="similarity">
    <text evidence="1">Belongs to the RbsD / FucU family. FucU mutarotase subfamily.</text>
</comment>
<sequence>MLKTISPLISPELLKVLAEMGHGDEIIFSDAHFPAHSMGPQVIRADGLLVSDLLQAIIPLFELDSYAPPLVMMAAVEGDTLDPEVERRYRNALSLQAPCPDIIRINRFAFYERAQKAFAIVITGERAKYGNILLKKGVTP</sequence>
<reference key="1">
    <citation type="journal article" date="2009" name="PLoS Genet.">
        <title>Organised genome dynamics in the Escherichia coli species results in highly diverse adaptive paths.</title>
        <authorList>
            <person name="Touchon M."/>
            <person name="Hoede C."/>
            <person name="Tenaillon O."/>
            <person name="Barbe V."/>
            <person name="Baeriswyl S."/>
            <person name="Bidet P."/>
            <person name="Bingen E."/>
            <person name="Bonacorsi S."/>
            <person name="Bouchier C."/>
            <person name="Bouvet O."/>
            <person name="Calteau A."/>
            <person name="Chiapello H."/>
            <person name="Clermont O."/>
            <person name="Cruveiller S."/>
            <person name="Danchin A."/>
            <person name="Diard M."/>
            <person name="Dossat C."/>
            <person name="Karoui M.E."/>
            <person name="Frapy E."/>
            <person name="Garry L."/>
            <person name="Ghigo J.M."/>
            <person name="Gilles A.M."/>
            <person name="Johnson J."/>
            <person name="Le Bouguenec C."/>
            <person name="Lescat M."/>
            <person name="Mangenot S."/>
            <person name="Martinez-Jehanne V."/>
            <person name="Matic I."/>
            <person name="Nassif X."/>
            <person name="Oztas S."/>
            <person name="Petit M.A."/>
            <person name="Pichon C."/>
            <person name="Rouy Z."/>
            <person name="Ruf C.S."/>
            <person name="Schneider D."/>
            <person name="Tourret J."/>
            <person name="Vacherie B."/>
            <person name="Vallenet D."/>
            <person name="Medigue C."/>
            <person name="Rocha E.P.C."/>
            <person name="Denamur E."/>
        </authorList>
    </citation>
    <scope>NUCLEOTIDE SEQUENCE [LARGE SCALE GENOMIC DNA]</scope>
    <source>
        <strain>ED1a</strain>
    </source>
</reference>
<evidence type="ECO:0000255" key="1">
    <source>
        <dbReference type="HAMAP-Rule" id="MF_01662"/>
    </source>
</evidence>
<proteinExistence type="inferred from homology"/>
<organism>
    <name type="scientific">Escherichia coli O81 (strain ED1a)</name>
    <dbReference type="NCBI Taxonomy" id="585397"/>
    <lineage>
        <taxon>Bacteria</taxon>
        <taxon>Pseudomonadati</taxon>
        <taxon>Pseudomonadota</taxon>
        <taxon>Gammaproteobacteria</taxon>
        <taxon>Enterobacterales</taxon>
        <taxon>Enterobacteriaceae</taxon>
        <taxon>Escherichia</taxon>
    </lineage>
</organism>
<dbReference type="EC" id="5.1.3.29" evidence="1"/>
<dbReference type="EMBL" id="CU928162">
    <property type="protein sequence ID" value="CAR09417.2"/>
    <property type="molecule type" value="Genomic_DNA"/>
</dbReference>
<dbReference type="RefSeq" id="WP_000920840.1">
    <property type="nucleotide sequence ID" value="NC_011745.1"/>
</dbReference>
<dbReference type="SMR" id="B7MZA0"/>
<dbReference type="GeneID" id="93779194"/>
<dbReference type="KEGG" id="ecq:ECED1_3257"/>
<dbReference type="HOGENOM" id="CLU_120075_1_0_6"/>
<dbReference type="UniPathway" id="UPA00956"/>
<dbReference type="Proteomes" id="UP000000748">
    <property type="component" value="Chromosome"/>
</dbReference>
<dbReference type="GO" id="GO:0005737">
    <property type="term" value="C:cytoplasm"/>
    <property type="evidence" value="ECO:0007669"/>
    <property type="project" value="UniProtKB-SubCell"/>
</dbReference>
<dbReference type="GO" id="GO:0042806">
    <property type="term" value="F:fucose binding"/>
    <property type="evidence" value="ECO:0007669"/>
    <property type="project" value="InterPro"/>
</dbReference>
<dbReference type="GO" id="GO:0036373">
    <property type="term" value="F:L-fucose mutarotase activity"/>
    <property type="evidence" value="ECO:0007669"/>
    <property type="project" value="UniProtKB-EC"/>
</dbReference>
<dbReference type="GO" id="GO:0036065">
    <property type="term" value="P:fucosylation"/>
    <property type="evidence" value="ECO:0007669"/>
    <property type="project" value="TreeGrafter"/>
</dbReference>
<dbReference type="GO" id="GO:0042354">
    <property type="term" value="P:L-fucose metabolic process"/>
    <property type="evidence" value="ECO:0007669"/>
    <property type="project" value="UniProtKB-UniRule"/>
</dbReference>
<dbReference type="FunFam" id="3.40.1650.10:FF:000001">
    <property type="entry name" value="L-fucose mutarotase"/>
    <property type="match status" value="1"/>
</dbReference>
<dbReference type="Gene3D" id="3.40.1650.10">
    <property type="entry name" value="RbsD-like domain"/>
    <property type="match status" value="1"/>
</dbReference>
<dbReference type="HAMAP" id="MF_01662">
    <property type="entry name" value="L_fucose_rotase"/>
    <property type="match status" value="1"/>
</dbReference>
<dbReference type="InterPro" id="IPR023751">
    <property type="entry name" value="L-fucose_mutarotase"/>
</dbReference>
<dbReference type="InterPro" id="IPR023750">
    <property type="entry name" value="RbsD-like_sf"/>
</dbReference>
<dbReference type="InterPro" id="IPR050443">
    <property type="entry name" value="RbsD/FucU_mutarotase"/>
</dbReference>
<dbReference type="InterPro" id="IPR007721">
    <property type="entry name" value="RbsD_FucU"/>
</dbReference>
<dbReference type="NCBIfam" id="NF011949">
    <property type="entry name" value="PRK15420.1"/>
    <property type="match status" value="1"/>
</dbReference>
<dbReference type="PANTHER" id="PTHR31690">
    <property type="entry name" value="FUCOSE MUTAROTASE"/>
    <property type="match status" value="1"/>
</dbReference>
<dbReference type="PANTHER" id="PTHR31690:SF4">
    <property type="entry name" value="FUCOSE MUTAROTASE"/>
    <property type="match status" value="1"/>
</dbReference>
<dbReference type="Pfam" id="PF05025">
    <property type="entry name" value="RbsD_FucU"/>
    <property type="match status" value="1"/>
</dbReference>
<dbReference type="SUPFAM" id="SSF102546">
    <property type="entry name" value="RbsD-like"/>
    <property type="match status" value="1"/>
</dbReference>
<feature type="chain" id="PRO_1000187180" description="L-fucose mutarotase">
    <location>
        <begin position="1"/>
        <end position="140"/>
    </location>
</feature>
<feature type="active site" description="Proton donor" evidence="1">
    <location>
        <position position="22"/>
    </location>
</feature>
<feature type="binding site" evidence="1">
    <location>
        <position position="30"/>
    </location>
    <ligand>
        <name>substrate</name>
    </ligand>
</feature>
<feature type="binding site" evidence="1">
    <location>
        <position position="107"/>
    </location>
    <ligand>
        <name>substrate</name>
    </ligand>
</feature>
<feature type="binding site" evidence="1">
    <location>
        <begin position="129"/>
        <end position="131"/>
    </location>
    <ligand>
        <name>substrate</name>
    </ligand>
</feature>
<gene>
    <name evidence="1" type="primary">fucU</name>
    <name type="ordered locus">ECED1_3257</name>
</gene>
<accession>B7MZA0</accession>
<keyword id="KW-0119">Carbohydrate metabolism</keyword>
<keyword id="KW-0963">Cytoplasm</keyword>
<keyword id="KW-0294">Fucose metabolism</keyword>
<keyword id="KW-0413">Isomerase</keyword>
<name>FUCM_ECO81</name>